<proteinExistence type="inferred from homology"/>
<gene>
    <name evidence="1" type="primary">htpG</name>
    <name type="ordered locus">Rru_A0072</name>
</gene>
<feature type="chain" id="PRO_0000237002" description="Chaperone protein HtpG">
    <location>
        <begin position="1"/>
        <end position="626"/>
    </location>
</feature>
<feature type="region of interest" description="A; substrate-binding" evidence="1">
    <location>
        <begin position="1"/>
        <end position="329"/>
    </location>
</feature>
<feature type="region of interest" description="B" evidence="1">
    <location>
        <begin position="330"/>
        <end position="549"/>
    </location>
</feature>
<feature type="region of interest" description="C" evidence="1">
    <location>
        <begin position="550"/>
        <end position="626"/>
    </location>
</feature>
<reference key="1">
    <citation type="journal article" date="2011" name="Stand. Genomic Sci.">
        <title>Complete genome sequence of Rhodospirillum rubrum type strain (S1).</title>
        <authorList>
            <person name="Munk A.C."/>
            <person name="Copeland A."/>
            <person name="Lucas S."/>
            <person name="Lapidus A."/>
            <person name="Del Rio T.G."/>
            <person name="Barry K."/>
            <person name="Detter J.C."/>
            <person name="Hammon N."/>
            <person name="Israni S."/>
            <person name="Pitluck S."/>
            <person name="Brettin T."/>
            <person name="Bruce D."/>
            <person name="Han C."/>
            <person name="Tapia R."/>
            <person name="Gilna P."/>
            <person name="Schmutz J."/>
            <person name="Larimer F."/>
            <person name="Land M."/>
            <person name="Kyrpides N.C."/>
            <person name="Mavromatis K."/>
            <person name="Richardson P."/>
            <person name="Rohde M."/>
            <person name="Goeker M."/>
            <person name="Klenk H.P."/>
            <person name="Zhang Y."/>
            <person name="Roberts G.P."/>
            <person name="Reslewic S."/>
            <person name="Schwartz D.C."/>
        </authorList>
    </citation>
    <scope>NUCLEOTIDE SEQUENCE [LARGE SCALE GENOMIC DNA]</scope>
    <source>
        <strain>ATCC 11170 / ATH 1.1.1 / DSM 467 / LMG 4362 / NCIMB 8255 / S1</strain>
    </source>
</reference>
<name>HTPG_RHORT</name>
<keyword id="KW-0067">ATP-binding</keyword>
<keyword id="KW-0143">Chaperone</keyword>
<keyword id="KW-0963">Cytoplasm</keyword>
<keyword id="KW-0547">Nucleotide-binding</keyword>
<keyword id="KW-1185">Reference proteome</keyword>
<keyword id="KW-0346">Stress response</keyword>
<dbReference type="EMBL" id="CP000230">
    <property type="protein sequence ID" value="ABC20877.1"/>
    <property type="molecule type" value="Genomic_DNA"/>
</dbReference>
<dbReference type="RefSeq" id="WP_011387833.1">
    <property type="nucleotide sequence ID" value="NC_007643.1"/>
</dbReference>
<dbReference type="RefSeq" id="YP_425164.1">
    <property type="nucleotide sequence ID" value="NC_007643.1"/>
</dbReference>
<dbReference type="SMR" id="Q2RYB8"/>
<dbReference type="STRING" id="269796.Rru_A0072"/>
<dbReference type="EnsemblBacteria" id="ABC20877">
    <property type="protein sequence ID" value="ABC20877"/>
    <property type="gene ID" value="Rru_A0072"/>
</dbReference>
<dbReference type="KEGG" id="rru:Rru_A0072"/>
<dbReference type="PATRIC" id="fig|269796.9.peg.126"/>
<dbReference type="eggNOG" id="COG0326">
    <property type="taxonomic scope" value="Bacteria"/>
</dbReference>
<dbReference type="HOGENOM" id="CLU_006684_3_0_5"/>
<dbReference type="PhylomeDB" id="Q2RYB8"/>
<dbReference type="Proteomes" id="UP000001929">
    <property type="component" value="Chromosome"/>
</dbReference>
<dbReference type="GO" id="GO:0005737">
    <property type="term" value="C:cytoplasm"/>
    <property type="evidence" value="ECO:0007669"/>
    <property type="project" value="UniProtKB-SubCell"/>
</dbReference>
<dbReference type="GO" id="GO:0005524">
    <property type="term" value="F:ATP binding"/>
    <property type="evidence" value="ECO:0007669"/>
    <property type="project" value="UniProtKB-UniRule"/>
</dbReference>
<dbReference type="GO" id="GO:0016887">
    <property type="term" value="F:ATP hydrolysis activity"/>
    <property type="evidence" value="ECO:0007669"/>
    <property type="project" value="InterPro"/>
</dbReference>
<dbReference type="GO" id="GO:0140662">
    <property type="term" value="F:ATP-dependent protein folding chaperone"/>
    <property type="evidence" value="ECO:0007669"/>
    <property type="project" value="InterPro"/>
</dbReference>
<dbReference type="GO" id="GO:0051082">
    <property type="term" value="F:unfolded protein binding"/>
    <property type="evidence" value="ECO:0007669"/>
    <property type="project" value="UniProtKB-UniRule"/>
</dbReference>
<dbReference type="CDD" id="cd16927">
    <property type="entry name" value="HATPase_Hsp90-like"/>
    <property type="match status" value="1"/>
</dbReference>
<dbReference type="FunFam" id="3.30.230.80:FF:000002">
    <property type="entry name" value="Molecular chaperone HtpG"/>
    <property type="match status" value="1"/>
</dbReference>
<dbReference type="FunFam" id="3.30.565.10:FF:000009">
    <property type="entry name" value="Molecular chaperone HtpG"/>
    <property type="match status" value="1"/>
</dbReference>
<dbReference type="Gene3D" id="3.30.230.80">
    <property type="match status" value="1"/>
</dbReference>
<dbReference type="Gene3D" id="3.40.50.11260">
    <property type="match status" value="1"/>
</dbReference>
<dbReference type="Gene3D" id="1.20.120.790">
    <property type="entry name" value="Heat shock protein 90, C-terminal domain"/>
    <property type="match status" value="1"/>
</dbReference>
<dbReference type="Gene3D" id="3.30.565.10">
    <property type="entry name" value="Histidine kinase-like ATPase, C-terminal domain"/>
    <property type="match status" value="1"/>
</dbReference>
<dbReference type="HAMAP" id="MF_00505">
    <property type="entry name" value="HSP90"/>
    <property type="match status" value="1"/>
</dbReference>
<dbReference type="InterPro" id="IPR036890">
    <property type="entry name" value="HATPase_C_sf"/>
</dbReference>
<dbReference type="InterPro" id="IPR037196">
    <property type="entry name" value="HSP90_C"/>
</dbReference>
<dbReference type="InterPro" id="IPR001404">
    <property type="entry name" value="Hsp90_fam"/>
</dbReference>
<dbReference type="InterPro" id="IPR020575">
    <property type="entry name" value="Hsp90_N"/>
</dbReference>
<dbReference type="InterPro" id="IPR020568">
    <property type="entry name" value="Ribosomal_Su5_D2-typ_SF"/>
</dbReference>
<dbReference type="NCBIfam" id="NF003555">
    <property type="entry name" value="PRK05218.1"/>
    <property type="match status" value="1"/>
</dbReference>
<dbReference type="PANTHER" id="PTHR11528">
    <property type="entry name" value="HEAT SHOCK PROTEIN 90 FAMILY MEMBER"/>
    <property type="match status" value="1"/>
</dbReference>
<dbReference type="Pfam" id="PF13589">
    <property type="entry name" value="HATPase_c_3"/>
    <property type="match status" value="1"/>
</dbReference>
<dbReference type="Pfam" id="PF00183">
    <property type="entry name" value="HSP90"/>
    <property type="match status" value="1"/>
</dbReference>
<dbReference type="PIRSF" id="PIRSF002583">
    <property type="entry name" value="Hsp90"/>
    <property type="match status" value="1"/>
</dbReference>
<dbReference type="PRINTS" id="PR00775">
    <property type="entry name" value="HEATSHOCK90"/>
</dbReference>
<dbReference type="SMART" id="SM00387">
    <property type="entry name" value="HATPase_c"/>
    <property type="match status" value="1"/>
</dbReference>
<dbReference type="SUPFAM" id="SSF55874">
    <property type="entry name" value="ATPase domain of HSP90 chaperone/DNA topoisomerase II/histidine kinase"/>
    <property type="match status" value="1"/>
</dbReference>
<dbReference type="SUPFAM" id="SSF110942">
    <property type="entry name" value="HSP90 C-terminal domain"/>
    <property type="match status" value="1"/>
</dbReference>
<dbReference type="SUPFAM" id="SSF54211">
    <property type="entry name" value="Ribosomal protein S5 domain 2-like"/>
    <property type="match status" value="1"/>
</dbReference>
<organism>
    <name type="scientific">Rhodospirillum rubrum (strain ATCC 11170 / ATH 1.1.1 / DSM 467 / LMG 4362 / NCIMB 8255 / S1)</name>
    <dbReference type="NCBI Taxonomy" id="269796"/>
    <lineage>
        <taxon>Bacteria</taxon>
        <taxon>Pseudomonadati</taxon>
        <taxon>Pseudomonadota</taxon>
        <taxon>Alphaproteobacteria</taxon>
        <taxon>Rhodospirillales</taxon>
        <taxon>Rhodospirillaceae</taxon>
        <taxon>Rhodospirillum</taxon>
    </lineage>
</organism>
<sequence>MSEETLSFQAEVSKLLDIVVHSLYSDRKIFLRELISNASDACDKLRYEGLTQPALLEGDGAFRIRLSIDAEAGTLTIADNGIGMNRHELIENLGTIARSGTQAFAEALKAKSQAASGDVSLIGQFGVGFYSAFMVADKVEVVTRRAGEAQGWRWSSDGKGSFSVSEVEGAGRGAAITLHLREDARDFLDEHRLREIVKTYSDHIAIPVDYAGKEGEPERLNEASALWTRPRDQITDEQYAEFYHHVAHGFETPWHTLHYRAEGKLEYTALLFVPGQQPFDLFTQDRKPRVKLYVNRVFITDDCEELLPSYLRFVRGVVDSSDLPLNVSREMLQDDPRLRKIKGGLTKRLIDDLAKRARDDESAYLTFWENFGAVLKEGIYEDFERKEDLVALARFRTTASDTPVSLETVIGRMKEGQSALYYITGDDATALARSPQVEGFVARGVEVLLLTDPIDEFWVSAVPKVGDTALKAVAQGSADLERLALIDGKQPPDDAEHAPAETAKMDALIAAMKAALGTAVADVRVSARLTDSPVCLVAKEGAMSLHLQKLLRQANQGSELSGDRVLEINPRHALVKTLAERAATGGSVDEAALLLMDQARILEGEAPADAIAFARRLTEVMGKGLI</sequence>
<comment type="function">
    <text evidence="1">Molecular chaperone. Has ATPase activity.</text>
</comment>
<comment type="subunit">
    <text evidence="1">Homodimer.</text>
</comment>
<comment type="subcellular location">
    <subcellularLocation>
        <location evidence="1">Cytoplasm</location>
    </subcellularLocation>
</comment>
<comment type="similarity">
    <text evidence="1">Belongs to the heat shock protein 90 family.</text>
</comment>
<protein>
    <recommendedName>
        <fullName evidence="1">Chaperone protein HtpG</fullName>
    </recommendedName>
    <alternativeName>
        <fullName evidence="1">Heat shock protein HtpG</fullName>
    </alternativeName>
    <alternativeName>
        <fullName evidence="1">High temperature protein G</fullName>
    </alternativeName>
</protein>
<evidence type="ECO:0000255" key="1">
    <source>
        <dbReference type="HAMAP-Rule" id="MF_00505"/>
    </source>
</evidence>
<accession>Q2RYB8</accession>